<evidence type="ECO:0000255" key="1">
    <source>
        <dbReference type="HAMAP-Rule" id="MF_03116"/>
    </source>
</evidence>
<evidence type="ECO:0000269" key="2">
    <source>
    </source>
</evidence>
<evidence type="ECO:0000269" key="3">
    <source>
    </source>
</evidence>
<evidence type="ECO:0000305" key="4"/>
<accession>Q9WVQ5</accession>
<accession>Q8BP46</accession>
<feature type="chain" id="PRO_0000239023" description="Methylthioribulose-1-phosphate dehydratase">
    <location>
        <begin position="1"/>
        <end position="241"/>
    </location>
</feature>
<feature type="active site" description="Proton donor/acceptor" evidence="1">
    <location>
        <position position="138"/>
    </location>
</feature>
<feature type="binding site" evidence="1">
    <location>
        <position position="96"/>
    </location>
    <ligand>
        <name>substrate</name>
    </ligand>
</feature>
<feature type="binding site" evidence="1">
    <location>
        <position position="114"/>
    </location>
    <ligand>
        <name>Zn(2+)</name>
        <dbReference type="ChEBI" id="CHEBI:29105"/>
    </ligand>
</feature>
<feature type="binding site" evidence="1">
    <location>
        <position position="116"/>
    </location>
    <ligand>
        <name>Zn(2+)</name>
        <dbReference type="ChEBI" id="CHEBI:29105"/>
    </ligand>
</feature>
<feature type="binding site" evidence="1">
    <location>
        <position position="194"/>
    </location>
    <ligand>
        <name>Zn(2+)</name>
        <dbReference type="ChEBI" id="CHEBI:29105"/>
    </ligand>
</feature>
<feature type="sequence conflict" description="In Ref. 2; BAC36968." evidence="4" ref="2">
    <original>C</original>
    <variation>S</variation>
    <location>
        <position position="11"/>
    </location>
</feature>
<keyword id="KW-0028">Amino-acid biosynthesis</keyword>
<keyword id="KW-0053">Apoptosis</keyword>
<keyword id="KW-0963">Cytoplasm</keyword>
<keyword id="KW-0456">Lyase</keyword>
<keyword id="KW-0479">Metal-binding</keyword>
<keyword id="KW-0486">Methionine biosynthesis</keyword>
<keyword id="KW-1185">Reference proteome</keyword>
<keyword id="KW-0862">Zinc</keyword>
<reference key="1">
    <citation type="submission" date="1999-06" db="EMBL/GenBank/DDBJ databases">
        <title>A cDNA sequence from murine monocyte-macrophage.</title>
        <authorList>
            <person name="Sha S."/>
            <person name="Aoki Y."/>
            <person name="Nishi Y."/>
        </authorList>
    </citation>
    <scope>NUCLEOTIDE SEQUENCE [MRNA]</scope>
    <source>
        <tissue>Macrophage</tissue>
        <tissue>Monocyte</tissue>
    </source>
</reference>
<reference key="2">
    <citation type="journal article" date="2005" name="Science">
        <title>The transcriptional landscape of the mammalian genome.</title>
        <authorList>
            <person name="Carninci P."/>
            <person name="Kasukawa T."/>
            <person name="Katayama S."/>
            <person name="Gough J."/>
            <person name="Frith M.C."/>
            <person name="Maeda N."/>
            <person name="Oyama R."/>
            <person name="Ravasi T."/>
            <person name="Lenhard B."/>
            <person name="Wells C."/>
            <person name="Kodzius R."/>
            <person name="Shimokawa K."/>
            <person name="Bajic V.B."/>
            <person name="Brenner S.E."/>
            <person name="Batalov S."/>
            <person name="Forrest A.R."/>
            <person name="Zavolan M."/>
            <person name="Davis M.J."/>
            <person name="Wilming L.G."/>
            <person name="Aidinis V."/>
            <person name="Allen J.E."/>
            <person name="Ambesi-Impiombato A."/>
            <person name="Apweiler R."/>
            <person name="Aturaliya R.N."/>
            <person name="Bailey T.L."/>
            <person name="Bansal M."/>
            <person name="Baxter L."/>
            <person name="Beisel K.W."/>
            <person name="Bersano T."/>
            <person name="Bono H."/>
            <person name="Chalk A.M."/>
            <person name="Chiu K.P."/>
            <person name="Choudhary V."/>
            <person name="Christoffels A."/>
            <person name="Clutterbuck D.R."/>
            <person name="Crowe M.L."/>
            <person name="Dalla E."/>
            <person name="Dalrymple B.P."/>
            <person name="de Bono B."/>
            <person name="Della Gatta G."/>
            <person name="di Bernardo D."/>
            <person name="Down T."/>
            <person name="Engstrom P."/>
            <person name="Fagiolini M."/>
            <person name="Faulkner G."/>
            <person name="Fletcher C.F."/>
            <person name="Fukushima T."/>
            <person name="Furuno M."/>
            <person name="Futaki S."/>
            <person name="Gariboldi M."/>
            <person name="Georgii-Hemming P."/>
            <person name="Gingeras T.R."/>
            <person name="Gojobori T."/>
            <person name="Green R.E."/>
            <person name="Gustincich S."/>
            <person name="Harbers M."/>
            <person name="Hayashi Y."/>
            <person name="Hensch T.K."/>
            <person name="Hirokawa N."/>
            <person name="Hill D."/>
            <person name="Huminiecki L."/>
            <person name="Iacono M."/>
            <person name="Ikeo K."/>
            <person name="Iwama A."/>
            <person name="Ishikawa T."/>
            <person name="Jakt M."/>
            <person name="Kanapin A."/>
            <person name="Katoh M."/>
            <person name="Kawasawa Y."/>
            <person name="Kelso J."/>
            <person name="Kitamura H."/>
            <person name="Kitano H."/>
            <person name="Kollias G."/>
            <person name="Krishnan S.P."/>
            <person name="Kruger A."/>
            <person name="Kummerfeld S.K."/>
            <person name="Kurochkin I.V."/>
            <person name="Lareau L.F."/>
            <person name="Lazarevic D."/>
            <person name="Lipovich L."/>
            <person name="Liu J."/>
            <person name="Liuni S."/>
            <person name="McWilliam S."/>
            <person name="Madan Babu M."/>
            <person name="Madera M."/>
            <person name="Marchionni L."/>
            <person name="Matsuda H."/>
            <person name="Matsuzawa S."/>
            <person name="Miki H."/>
            <person name="Mignone F."/>
            <person name="Miyake S."/>
            <person name="Morris K."/>
            <person name="Mottagui-Tabar S."/>
            <person name="Mulder N."/>
            <person name="Nakano N."/>
            <person name="Nakauchi H."/>
            <person name="Ng P."/>
            <person name="Nilsson R."/>
            <person name="Nishiguchi S."/>
            <person name="Nishikawa S."/>
            <person name="Nori F."/>
            <person name="Ohara O."/>
            <person name="Okazaki Y."/>
            <person name="Orlando V."/>
            <person name="Pang K.C."/>
            <person name="Pavan W.J."/>
            <person name="Pavesi G."/>
            <person name="Pesole G."/>
            <person name="Petrovsky N."/>
            <person name="Piazza S."/>
            <person name="Reed J."/>
            <person name="Reid J.F."/>
            <person name="Ring B.Z."/>
            <person name="Ringwald M."/>
            <person name="Rost B."/>
            <person name="Ruan Y."/>
            <person name="Salzberg S.L."/>
            <person name="Sandelin A."/>
            <person name="Schneider C."/>
            <person name="Schoenbach C."/>
            <person name="Sekiguchi K."/>
            <person name="Semple C.A."/>
            <person name="Seno S."/>
            <person name="Sessa L."/>
            <person name="Sheng Y."/>
            <person name="Shibata Y."/>
            <person name="Shimada H."/>
            <person name="Shimada K."/>
            <person name="Silva D."/>
            <person name="Sinclair B."/>
            <person name="Sperling S."/>
            <person name="Stupka E."/>
            <person name="Sugiura K."/>
            <person name="Sultana R."/>
            <person name="Takenaka Y."/>
            <person name="Taki K."/>
            <person name="Tammoja K."/>
            <person name="Tan S.L."/>
            <person name="Tang S."/>
            <person name="Taylor M.S."/>
            <person name="Tegner J."/>
            <person name="Teichmann S.A."/>
            <person name="Ueda H.R."/>
            <person name="van Nimwegen E."/>
            <person name="Verardo R."/>
            <person name="Wei C.L."/>
            <person name="Yagi K."/>
            <person name="Yamanishi H."/>
            <person name="Zabarovsky E."/>
            <person name="Zhu S."/>
            <person name="Zimmer A."/>
            <person name="Hide W."/>
            <person name="Bult C."/>
            <person name="Grimmond S.M."/>
            <person name="Teasdale R.D."/>
            <person name="Liu E.T."/>
            <person name="Brusic V."/>
            <person name="Quackenbush J."/>
            <person name="Wahlestedt C."/>
            <person name="Mattick J.S."/>
            <person name="Hume D.A."/>
            <person name="Kai C."/>
            <person name="Sasaki D."/>
            <person name="Tomaru Y."/>
            <person name="Fukuda S."/>
            <person name="Kanamori-Katayama M."/>
            <person name="Suzuki M."/>
            <person name="Aoki J."/>
            <person name="Arakawa T."/>
            <person name="Iida J."/>
            <person name="Imamura K."/>
            <person name="Itoh M."/>
            <person name="Kato T."/>
            <person name="Kawaji H."/>
            <person name="Kawagashira N."/>
            <person name="Kawashima T."/>
            <person name="Kojima M."/>
            <person name="Kondo S."/>
            <person name="Konno H."/>
            <person name="Nakano K."/>
            <person name="Ninomiya N."/>
            <person name="Nishio T."/>
            <person name="Okada M."/>
            <person name="Plessy C."/>
            <person name="Shibata K."/>
            <person name="Shiraki T."/>
            <person name="Suzuki S."/>
            <person name="Tagami M."/>
            <person name="Waki K."/>
            <person name="Watahiki A."/>
            <person name="Okamura-Oho Y."/>
            <person name="Suzuki H."/>
            <person name="Kawai J."/>
            <person name="Hayashizaki Y."/>
        </authorList>
    </citation>
    <scope>NUCLEOTIDE SEQUENCE [LARGE SCALE MRNA]</scope>
    <source>
        <strain>C57BL/6J</strain>
        <tissue>Embryo</tissue>
    </source>
</reference>
<reference key="3">
    <citation type="journal article" date="2004" name="Genome Res.">
        <title>The status, quality, and expansion of the NIH full-length cDNA project: the Mammalian Gene Collection (MGC).</title>
        <authorList>
            <consortium name="The MGC Project Team"/>
        </authorList>
    </citation>
    <scope>NUCLEOTIDE SEQUENCE [LARGE SCALE MRNA]</scope>
    <source>
        <strain>C57BL/6J</strain>
        <tissue>Mammary gland</tissue>
    </source>
</reference>
<reference key="4">
    <citation type="journal article" date="2004" name="J. Biol. Chem.">
        <title>Induced inhibition of ischemic/hypoxic injury by APIP, a novel Apaf-1-interacting protein.</title>
        <authorList>
            <person name="Cho D.-H."/>
            <person name="Hong Y.-M."/>
            <person name="Lee H.-J."/>
            <person name="Woo H.-N."/>
            <person name="Pyo J.-O."/>
            <person name="Mak T.W."/>
            <person name="Jung Y.-K."/>
        </authorList>
    </citation>
    <scope>FUNCTION</scope>
    <scope>INDUCTION</scope>
    <scope>TISSUE SPECIFICITY</scope>
</reference>
<reference key="5">
    <citation type="journal article" date="2007" name="Oncogene">
        <title>Suppression of hypoxic cell death by APIP-induced sustained activation of AKT and ERK1/2.</title>
        <authorList>
            <person name="Cho D.-H."/>
            <person name="Lee H.-J."/>
            <person name="Kim H.-J."/>
            <person name="Hong S.-H."/>
            <person name="Pyo J.-O."/>
            <person name="Cho C."/>
            <person name="Jung Y.-K."/>
        </authorList>
    </citation>
    <scope>FUNCTION</scope>
</reference>
<reference key="6">
    <citation type="journal article" date="2010" name="Cell">
        <title>A tissue-specific atlas of mouse protein phosphorylation and expression.</title>
        <authorList>
            <person name="Huttlin E.L."/>
            <person name="Jedrychowski M.P."/>
            <person name="Elias J.E."/>
            <person name="Goswami T."/>
            <person name="Rad R."/>
            <person name="Beausoleil S.A."/>
            <person name="Villen J."/>
            <person name="Haas W."/>
            <person name="Sowa M.E."/>
            <person name="Gygi S.P."/>
        </authorList>
    </citation>
    <scope>IDENTIFICATION BY MASS SPECTROMETRY [LARGE SCALE ANALYSIS]</scope>
    <source>
        <tissue>Brain</tissue>
        <tissue>Brown adipose tissue</tissue>
        <tissue>Heart</tissue>
        <tissue>Kidney</tissue>
        <tissue>Liver</tissue>
        <tissue>Lung</tissue>
        <tissue>Pancreas</tissue>
        <tissue>Spleen</tissue>
        <tissue>Testis</tissue>
    </source>
</reference>
<organism>
    <name type="scientific">Mus musculus</name>
    <name type="common">Mouse</name>
    <dbReference type="NCBI Taxonomy" id="10090"/>
    <lineage>
        <taxon>Eukaryota</taxon>
        <taxon>Metazoa</taxon>
        <taxon>Chordata</taxon>
        <taxon>Craniata</taxon>
        <taxon>Vertebrata</taxon>
        <taxon>Euteleostomi</taxon>
        <taxon>Mammalia</taxon>
        <taxon>Eutheria</taxon>
        <taxon>Euarchontoglires</taxon>
        <taxon>Glires</taxon>
        <taxon>Rodentia</taxon>
        <taxon>Myomorpha</taxon>
        <taxon>Muroidea</taxon>
        <taxon>Muridae</taxon>
        <taxon>Murinae</taxon>
        <taxon>Mus</taxon>
        <taxon>Mus</taxon>
    </lineage>
</organism>
<sequence>MSGCQAQGDCCSRPCGAQDKEHPRFLIPELCKQFYHLGWVTGTGGGISLKHGNEIYIAPSGVQKERIQPEDMFVCDINEQDISGPPASKKLKKSQCTPLFMNAYTMRGAGAVIHTHSKAAVMATLLFPGQEFKITHQEMIKGIRKCTSGGYYRYDDMLVVPIIENTPEEKDLKERMAHAMNEYPDSCAVLVRRHGVYVWGETWEKAKTMCECYDYLFDIAVSMKKMGLDPTQLPVGENGIV</sequence>
<dbReference type="EC" id="4.2.1.109" evidence="1"/>
<dbReference type="EMBL" id="AB028863">
    <property type="protein sequence ID" value="BAA78906.1"/>
    <property type="molecule type" value="mRNA"/>
</dbReference>
<dbReference type="EMBL" id="AK077705">
    <property type="protein sequence ID" value="BAC36968.1"/>
    <property type="molecule type" value="mRNA"/>
</dbReference>
<dbReference type="EMBL" id="AK145450">
    <property type="protein sequence ID" value="BAE26445.1"/>
    <property type="molecule type" value="mRNA"/>
</dbReference>
<dbReference type="EMBL" id="BC028434">
    <property type="protein sequence ID" value="AAH28434.1"/>
    <property type="molecule type" value="mRNA"/>
</dbReference>
<dbReference type="CCDS" id="CCDS16474.1"/>
<dbReference type="RefSeq" id="NP_062709.3">
    <property type="nucleotide sequence ID" value="NM_019735.4"/>
</dbReference>
<dbReference type="SMR" id="Q9WVQ5"/>
<dbReference type="BioGRID" id="207931">
    <property type="interactions" value="7"/>
</dbReference>
<dbReference type="CORUM" id="Q9WVQ5"/>
<dbReference type="FunCoup" id="Q9WVQ5">
    <property type="interactions" value="1518"/>
</dbReference>
<dbReference type="STRING" id="10090.ENSMUSP00000011055"/>
<dbReference type="GlyGen" id="Q9WVQ5">
    <property type="glycosylation" value="1 site, 1 O-linked glycan (1 site)"/>
</dbReference>
<dbReference type="iPTMnet" id="Q9WVQ5"/>
<dbReference type="PhosphoSitePlus" id="Q9WVQ5"/>
<dbReference type="SwissPalm" id="Q9WVQ5"/>
<dbReference type="jPOST" id="Q9WVQ5"/>
<dbReference type="PaxDb" id="10090-ENSMUSP00000011055"/>
<dbReference type="PeptideAtlas" id="Q9WVQ5"/>
<dbReference type="ProteomicsDB" id="286083"/>
<dbReference type="Pumba" id="Q9WVQ5"/>
<dbReference type="Antibodypedia" id="25889">
    <property type="antibodies" value="327 antibodies from 31 providers"/>
</dbReference>
<dbReference type="Ensembl" id="ENSMUST00000011055.7">
    <property type="protein sequence ID" value="ENSMUSP00000011055.7"/>
    <property type="gene ID" value="ENSMUSG00000010911.13"/>
</dbReference>
<dbReference type="GeneID" id="56369"/>
<dbReference type="KEGG" id="mmu:56369"/>
<dbReference type="UCSC" id="uc008lin.2">
    <property type="organism name" value="mouse"/>
</dbReference>
<dbReference type="AGR" id="MGI:1926788"/>
<dbReference type="CTD" id="51074"/>
<dbReference type="MGI" id="MGI:1926788">
    <property type="gene designation" value="Apip"/>
</dbReference>
<dbReference type="VEuPathDB" id="HostDB:ENSMUSG00000010911"/>
<dbReference type="eggNOG" id="KOG2631">
    <property type="taxonomic scope" value="Eukaryota"/>
</dbReference>
<dbReference type="GeneTree" id="ENSGT00390000001680"/>
<dbReference type="HOGENOM" id="CLU_006033_4_0_1"/>
<dbReference type="InParanoid" id="Q9WVQ5"/>
<dbReference type="OMA" id="WFPGTSG"/>
<dbReference type="OrthoDB" id="191080at2759"/>
<dbReference type="PhylomeDB" id="Q9WVQ5"/>
<dbReference type="TreeFam" id="TF105632"/>
<dbReference type="Reactome" id="R-MMU-111458">
    <property type="pathway name" value="Formation of apoptosome"/>
</dbReference>
<dbReference type="Reactome" id="R-MMU-9627069">
    <property type="pathway name" value="Regulation of the apoptosome activity"/>
</dbReference>
<dbReference type="UniPathway" id="UPA00904">
    <property type="reaction ID" value="UER00875"/>
</dbReference>
<dbReference type="BioGRID-ORCS" id="56369">
    <property type="hits" value="2 hits in 77 CRISPR screens"/>
</dbReference>
<dbReference type="ChiTaRS" id="Apip">
    <property type="organism name" value="mouse"/>
</dbReference>
<dbReference type="PRO" id="PR:Q9WVQ5"/>
<dbReference type="Proteomes" id="UP000000589">
    <property type="component" value="Chromosome 2"/>
</dbReference>
<dbReference type="RNAct" id="Q9WVQ5">
    <property type="molecule type" value="protein"/>
</dbReference>
<dbReference type="Bgee" id="ENSMUSG00000010911">
    <property type="expression patterns" value="Expressed in heart right ventricle and 238 other cell types or tissues"/>
</dbReference>
<dbReference type="GO" id="GO:0005737">
    <property type="term" value="C:cytoplasm"/>
    <property type="evidence" value="ECO:0000250"/>
    <property type="project" value="UniProtKB"/>
</dbReference>
<dbReference type="GO" id="GO:0042802">
    <property type="term" value="F:identical protein binding"/>
    <property type="evidence" value="ECO:0007669"/>
    <property type="project" value="Ensembl"/>
</dbReference>
<dbReference type="GO" id="GO:0046570">
    <property type="term" value="F:methylthioribulose 1-phosphate dehydratase activity"/>
    <property type="evidence" value="ECO:0000250"/>
    <property type="project" value="UniProtKB"/>
</dbReference>
<dbReference type="GO" id="GO:0008270">
    <property type="term" value="F:zinc ion binding"/>
    <property type="evidence" value="ECO:0000250"/>
    <property type="project" value="UniProtKB"/>
</dbReference>
<dbReference type="GO" id="GO:0006915">
    <property type="term" value="P:apoptotic process"/>
    <property type="evidence" value="ECO:0000315"/>
    <property type="project" value="MGI"/>
</dbReference>
<dbReference type="GO" id="GO:0019509">
    <property type="term" value="P:L-methionine salvage from methylthioadenosine"/>
    <property type="evidence" value="ECO:0000250"/>
    <property type="project" value="UniProtKB"/>
</dbReference>
<dbReference type="GO" id="GO:0043066">
    <property type="term" value="P:negative regulation of apoptotic process"/>
    <property type="evidence" value="ECO:0000315"/>
    <property type="project" value="UniProtKB"/>
</dbReference>
<dbReference type="GO" id="GO:0051289">
    <property type="term" value="P:protein homotetramerization"/>
    <property type="evidence" value="ECO:0000250"/>
    <property type="project" value="UniProtKB"/>
</dbReference>
<dbReference type="GO" id="GO:0070269">
    <property type="term" value="P:pyroptotic inflammatory response"/>
    <property type="evidence" value="ECO:0000250"/>
    <property type="project" value="UniProtKB"/>
</dbReference>
<dbReference type="GO" id="GO:0070372">
    <property type="term" value="P:regulation of ERK1 and ERK2 cascade"/>
    <property type="evidence" value="ECO:0000315"/>
    <property type="project" value="UniProtKB"/>
</dbReference>
<dbReference type="FunFam" id="3.40.225.10:FF:000003">
    <property type="entry name" value="Methylthioribulose-1-phosphate dehydratase"/>
    <property type="match status" value="1"/>
</dbReference>
<dbReference type="Gene3D" id="3.40.225.10">
    <property type="entry name" value="Class II aldolase/adducin N-terminal domain"/>
    <property type="match status" value="1"/>
</dbReference>
<dbReference type="HAMAP" id="MF_03116">
    <property type="entry name" value="Salvage_MtnB_euk"/>
    <property type="match status" value="1"/>
</dbReference>
<dbReference type="InterPro" id="IPR001303">
    <property type="entry name" value="Aldolase_II/adducin_N"/>
</dbReference>
<dbReference type="InterPro" id="IPR036409">
    <property type="entry name" value="Aldolase_II/adducin_N_sf"/>
</dbReference>
<dbReference type="InterPro" id="IPR017714">
    <property type="entry name" value="MethylthioRu-1-P_deHdtase_MtnB"/>
</dbReference>
<dbReference type="InterPro" id="IPR027514">
    <property type="entry name" value="Salvage_MtnB_euk"/>
</dbReference>
<dbReference type="NCBIfam" id="TIGR03328">
    <property type="entry name" value="salvage_mtnB"/>
    <property type="match status" value="1"/>
</dbReference>
<dbReference type="PANTHER" id="PTHR10640">
    <property type="entry name" value="METHYLTHIORIBULOSE-1-PHOSPHATE DEHYDRATASE"/>
    <property type="match status" value="1"/>
</dbReference>
<dbReference type="PANTHER" id="PTHR10640:SF7">
    <property type="entry name" value="METHYLTHIORIBULOSE-1-PHOSPHATE DEHYDRATASE"/>
    <property type="match status" value="1"/>
</dbReference>
<dbReference type="Pfam" id="PF00596">
    <property type="entry name" value="Aldolase_II"/>
    <property type="match status" value="1"/>
</dbReference>
<dbReference type="SMART" id="SM01007">
    <property type="entry name" value="Aldolase_II"/>
    <property type="match status" value="1"/>
</dbReference>
<dbReference type="SUPFAM" id="SSF53639">
    <property type="entry name" value="AraD/HMP-PK domain-like"/>
    <property type="match status" value="1"/>
</dbReference>
<gene>
    <name evidence="1" type="primary">Apip</name>
    <name type="synonym">Mmrp19</name>
</gene>
<protein>
    <recommendedName>
        <fullName evidence="1">Methylthioribulose-1-phosphate dehydratase</fullName>
        <shortName evidence="1">MTRu-1-P dehydratase</shortName>
        <ecNumber evidence="1">4.2.1.109</ecNumber>
    </recommendedName>
    <alternativeName>
        <fullName evidence="1">APAF1-interacting protein</fullName>
    </alternativeName>
    <alternativeName>
        <fullName>Monocyte/macrophage protein 19</fullName>
    </alternativeName>
</protein>
<comment type="function">
    <text evidence="1 2 3">Catalyzes the dehydration of methylthioribulose-1-phosphate (MTRu-1-P) into 2,3-diketo-5-methylthiopentyl-1-phosphate (DK-MTP-1-P). Functions in the methionine salvage pathway, which plays a key role in cancer, apoptosis, microbial proliferation and inflammation. May inhibit the CASP1-related inflammatory response (pyroptosis), the CASP9-dependent apoptotic pathway and the cytochrome c-dependent and APAF1-mediated cell death.</text>
</comment>
<comment type="catalytic activity">
    <reaction evidence="1">
        <text>5-(methylsulfanyl)-D-ribulose 1-phosphate = 5-methylsulfanyl-2,3-dioxopentyl phosphate + H2O</text>
        <dbReference type="Rhea" id="RHEA:15549"/>
        <dbReference type="ChEBI" id="CHEBI:15377"/>
        <dbReference type="ChEBI" id="CHEBI:58548"/>
        <dbReference type="ChEBI" id="CHEBI:58828"/>
        <dbReference type="EC" id="4.2.1.109"/>
    </reaction>
</comment>
<comment type="cofactor">
    <cofactor evidence="1">
        <name>Zn(2+)</name>
        <dbReference type="ChEBI" id="CHEBI:29105"/>
    </cofactor>
    <text evidence="1">Binds 1 zinc ion per subunit.</text>
</comment>
<comment type="pathway">
    <text evidence="1">Amino-acid biosynthesis; L-methionine biosynthesis via salvage pathway; L-methionine from S-methyl-5-thio-alpha-D-ribose 1-phosphate: step 2/6.</text>
</comment>
<comment type="subunit">
    <text evidence="1">Homotetramer. Interacts with APAF1. May interact with CASP1.</text>
</comment>
<comment type="subcellular location">
    <subcellularLocation>
        <location evidence="1">Cytoplasm</location>
    </subcellularLocation>
</comment>
<comment type="tissue specificity">
    <text evidence="2">Expressed in skeletal muscle (at protein level).</text>
</comment>
<comment type="induction">
    <text evidence="2">Up-regulated upon ischemia/hypoxia.</text>
</comment>
<comment type="similarity">
    <text evidence="1">Belongs to the aldolase class II family. MtnB subfamily.</text>
</comment>
<name>MTNB_MOUSE</name>
<proteinExistence type="evidence at protein level"/>